<gene>
    <name evidence="1" type="primary">atg26</name>
    <name type="ORF">AN4601</name>
</gene>
<proteinExistence type="inferred from homology"/>
<sequence>MRPFIDDAKRRAERRLSASRQSISARRMFASSFPDRLKVDADDAQMDYTAPPSSNDSRDGMQYMQQSVMSLIAAVGSRTDLRARFDDSSDSEEETRTRPRFLSEKPFDQQITASPRADVTLHVPSAPETRSSSRERGRRHRRSISEHKLFRPFKAGSASQDKKQDASPDPGPSTSDRLSPIPVLPRPRSATPRAAPILSRMVEARALLETENPEENPQTLEEKEQGVSKKSQVSPLSRQLMEMFRFPTPEKVVVEYACSLLQSMLLQGYMYVTEGHICFYAYLPRQSTRVIKSGYIYKRGRKNPKYNRYWFSLKEDVLSYYADPSNLYFPSGQIDLRYGISASLTEPKDKSRESRDFQVTTDHRTYYFRADSSVNAKEWVRALQKVIFRTHNEGESIKVAFPIENILDVEESPMVEFAQTFKIRVVESEETYAIDEHYFTFFDPDSGRRAFDLLKGLISGTPTRSPPGLSPLPDHTAQPRRSRGSQNRWSLTSGSKSQVVSTRRQRSASTSILGSGTGNENSPQRQEDSSSSFFNSIDQVTESSAVLQSITDTTESASQILNRSDVFQSPTIHTWQQRTSGTARSNRRHSDEITRSTTEHGLDGISLARDGPEMQYTNSDSEQESKDASRLYSAVALNEIVKAGTYPLQRAAGLAGYLKSRSKEMSNLLATESMGYIEKVSGMWAGGRRHYGETDGLLPDDRALYPETAEESLRDRERFRAHFALPPTEKLEAAYFAYLHRALPLYGKIYISQNRLCFRSLLPGTRTKMILPLHDIENVEKEKGFQFGYHGLVVVIRGHEELFFEFNAADARDDCAVTLHQRLESAKFLVESISLSQQETDESEAAKVEHRMLQEARRNASAEQDLRPGLSESSELHSIFDDPRASIVNFKPAEPLKITCLTIGSRGDVQPYIALCKGLLAEGHKPKIATHAEFEPWVRKHGIDFAPVDGDPAELMRLCVENGMFTYSFLKEATAKFRGWIDDLLSSAWRACQDSDLLIESPSAMAGIHIAEALRIPYFRGFTMPWSRTRAYPHAFAVPESRLGGAYNYITYVMFENVFWRAIAGQVNRWRMKELGLRATNLDKMQPNKVPFLYNFSPSVVPPPLDFPDWVRITGYWFLSESSDWTPPRALAEFIQCARQDGKKIVYIGFGSIVVSDPSALTRTVVESVQKADVRCILSKGWSARLGDPTSTKVEIPLPPEIHQIQSAPHDWLFSQIDAAAHHGGAGTTGASLRAGVPTIIKPFFGDQFFFGNRVEDLGVGICMKKLNVSVFSRALWTATHDERMIVRAKQLGERIRSEDGVATAIQAIYRDLEYATTLTRQRSSISSTPFSPTPSTKTSDDQNANDDIADIEDWTFIGDESDLEFPRRARERAVSGADNIPERTILGSRSIYADS</sequence>
<organism>
    <name type="scientific">Emericella nidulans (strain FGSC A4 / ATCC 38163 / CBS 112.46 / NRRL 194 / M139)</name>
    <name type="common">Aspergillus nidulans</name>
    <dbReference type="NCBI Taxonomy" id="227321"/>
    <lineage>
        <taxon>Eukaryota</taxon>
        <taxon>Fungi</taxon>
        <taxon>Dikarya</taxon>
        <taxon>Ascomycota</taxon>
        <taxon>Pezizomycotina</taxon>
        <taxon>Eurotiomycetes</taxon>
        <taxon>Eurotiomycetidae</taxon>
        <taxon>Eurotiales</taxon>
        <taxon>Aspergillaceae</taxon>
        <taxon>Aspergillus</taxon>
        <taxon>Aspergillus subgen. Nidulantes</taxon>
    </lineage>
</organism>
<accession>Q5B4C9</accession>
<accession>C8V7T8</accession>
<comment type="function">
    <text evidence="1">Sterol glycosyltransferase responsible for the glycosylation of ergosterol to form ergosterol-glucoside.</text>
</comment>
<comment type="catalytic activity">
    <reaction evidence="1">
        <text>a sterol + UDP-alpha-D-glucose = a sterol 3-beta-D-glucoside + UDP + H(+)</text>
        <dbReference type="Rhea" id="RHEA:22724"/>
        <dbReference type="ChEBI" id="CHEBI:15378"/>
        <dbReference type="ChEBI" id="CHEBI:15889"/>
        <dbReference type="ChEBI" id="CHEBI:37424"/>
        <dbReference type="ChEBI" id="CHEBI:58223"/>
        <dbReference type="ChEBI" id="CHEBI:58885"/>
        <dbReference type="EC" id="2.4.1.173"/>
    </reaction>
    <physiologicalReaction direction="left-to-right" evidence="1">
        <dbReference type="Rhea" id="RHEA:22725"/>
    </physiologicalReaction>
</comment>
<comment type="catalytic activity">
    <reaction evidence="1">
        <text>ergosterol + UDP-alpha-D-glucose = ergosteryl 3-beta-D-glucoside + UDP + H(+)</text>
        <dbReference type="Rhea" id="RHEA:61836"/>
        <dbReference type="ChEBI" id="CHEBI:15378"/>
        <dbReference type="ChEBI" id="CHEBI:16933"/>
        <dbReference type="ChEBI" id="CHEBI:52973"/>
        <dbReference type="ChEBI" id="CHEBI:58223"/>
        <dbReference type="ChEBI" id="CHEBI:58885"/>
    </reaction>
    <physiologicalReaction direction="left-to-right" evidence="1">
        <dbReference type="Rhea" id="RHEA:61837"/>
    </physiologicalReaction>
</comment>
<comment type="subcellular location">
    <subcellularLocation>
        <location evidence="1">Cytoplasm</location>
    </subcellularLocation>
    <subcellularLocation>
        <location evidence="2">Preautophagosomal structure membrane</location>
        <topology evidence="2">Peripheral membrane protein</topology>
    </subcellularLocation>
</comment>
<comment type="domain">
    <text evidence="2">The GRAM and PH domains are required for the localization of ATG26 to the preautophagosomal structure (PAS) and are involved in autophagy (By similarity).</text>
</comment>
<comment type="similarity">
    <text evidence="6">Belongs to the glycosyltransferase 28 family.</text>
</comment>
<protein>
    <recommendedName>
        <fullName evidence="6">Sterol 3-beta-glucosyltransferase</fullName>
        <ecNumber evidence="1">2.4.1.-</ecNumber>
        <ecNumber evidence="1">2.4.1.173</ecNumber>
    </recommendedName>
    <alternativeName>
        <fullName evidence="1">Autophagy-related protein 26</fullName>
    </alternativeName>
</protein>
<name>ATG26_EMENI</name>
<feature type="chain" id="PRO_0000215610" description="Sterol 3-beta-glucosyltransferase">
    <location>
        <begin position="1"/>
        <end position="1396"/>
    </location>
</feature>
<feature type="domain" description="GRAM 1" evidence="3">
    <location>
        <begin position="238"/>
        <end position="273"/>
    </location>
</feature>
<feature type="domain" description="PH" evidence="4">
    <location>
        <begin position="289"/>
        <end position="388"/>
    </location>
</feature>
<feature type="domain" description="GRAM 2" evidence="3">
    <location>
        <begin position="717"/>
        <end position="783"/>
    </location>
</feature>
<feature type="region of interest" description="Disordered" evidence="5">
    <location>
        <begin position="1"/>
        <end position="21"/>
    </location>
</feature>
<feature type="region of interest" description="Disordered" evidence="5">
    <location>
        <begin position="40"/>
        <end position="64"/>
    </location>
</feature>
<feature type="region of interest" description="Disordered" evidence="5">
    <location>
        <begin position="83"/>
        <end position="196"/>
    </location>
</feature>
<feature type="region of interest" description="Disordered" evidence="5">
    <location>
        <begin position="209"/>
        <end position="232"/>
    </location>
</feature>
<feature type="region of interest" description="Disordered" evidence="5">
    <location>
        <begin position="460"/>
        <end position="532"/>
    </location>
</feature>
<feature type="region of interest" description="Disordered" evidence="5">
    <location>
        <begin position="571"/>
        <end position="627"/>
    </location>
</feature>
<feature type="region of interest" description="Disordered" evidence="5">
    <location>
        <begin position="1324"/>
        <end position="1346"/>
    </location>
</feature>
<feature type="compositionally biased region" description="Basic and acidic residues" evidence="5">
    <location>
        <begin position="1"/>
        <end position="16"/>
    </location>
</feature>
<feature type="compositionally biased region" description="Basic and acidic residues" evidence="5">
    <location>
        <begin position="94"/>
        <end position="107"/>
    </location>
</feature>
<feature type="compositionally biased region" description="Low complexity" evidence="5">
    <location>
        <begin position="186"/>
        <end position="196"/>
    </location>
</feature>
<feature type="compositionally biased region" description="Polar residues" evidence="5">
    <location>
        <begin position="484"/>
        <end position="532"/>
    </location>
</feature>
<feature type="compositionally biased region" description="Polar residues" evidence="5">
    <location>
        <begin position="571"/>
        <end position="584"/>
    </location>
</feature>
<feature type="compositionally biased region" description="Basic and acidic residues" evidence="5">
    <location>
        <begin position="588"/>
        <end position="602"/>
    </location>
</feature>
<feature type="compositionally biased region" description="Low complexity" evidence="5">
    <location>
        <begin position="1324"/>
        <end position="1343"/>
    </location>
</feature>
<feature type="binding site" evidence="1">
    <location>
        <position position="905"/>
    </location>
    <ligand>
        <name>UDP-alpha-D-glucose</name>
        <dbReference type="ChEBI" id="CHEBI:58885"/>
    </ligand>
</feature>
<feature type="binding site" evidence="1">
    <location>
        <position position="906"/>
    </location>
    <ligand>
        <name>UDP-alpha-D-glucose</name>
        <dbReference type="ChEBI" id="CHEBI:58885"/>
    </ligand>
</feature>
<feature type="binding site" evidence="1">
    <location>
        <position position="908"/>
    </location>
    <ligand>
        <name>UDP-alpha-D-glucose</name>
        <dbReference type="ChEBI" id="CHEBI:58885"/>
    </ligand>
</feature>
<feature type="binding site" evidence="1">
    <location>
        <position position="1208"/>
    </location>
    <ligand>
        <name>UDP-alpha-D-glucose</name>
        <dbReference type="ChEBI" id="CHEBI:58885"/>
    </ligand>
</feature>
<feature type="binding site" evidence="1">
    <location>
        <position position="1210"/>
    </location>
    <ligand>
        <name>UDP-alpha-D-glucose</name>
        <dbReference type="ChEBI" id="CHEBI:58885"/>
    </ligand>
</feature>
<feature type="binding site" evidence="1">
    <location>
        <position position="1223"/>
    </location>
    <ligand>
        <name>UDP-alpha-D-glucose</name>
        <dbReference type="ChEBI" id="CHEBI:58885"/>
    </ligand>
</feature>
<feature type="binding site" evidence="1">
    <location>
        <position position="1227"/>
    </location>
    <ligand>
        <name>UDP-alpha-D-glucose</name>
        <dbReference type="ChEBI" id="CHEBI:58885"/>
    </ligand>
</feature>
<feature type="binding site" evidence="1">
    <location>
        <position position="1228"/>
    </location>
    <ligand>
        <name>UDP-alpha-D-glucose</name>
        <dbReference type="ChEBI" id="CHEBI:58885"/>
    </ligand>
</feature>
<feature type="binding site" evidence="1">
    <location>
        <position position="1247"/>
    </location>
    <ligand>
        <name>UDP-alpha-D-glucose</name>
        <dbReference type="ChEBI" id="CHEBI:58885"/>
    </ligand>
</feature>
<feature type="binding site" evidence="1">
    <location>
        <position position="1248"/>
    </location>
    <ligand>
        <name>UDP-alpha-D-glucose</name>
        <dbReference type="ChEBI" id="CHEBI:58885"/>
    </ligand>
</feature>
<dbReference type="EC" id="2.4.1.-" evidence="1"/>
<dbReference type="EC" id="2.4.1.173" evidence="1"/>
<dbReference type="EMBL" id="AACD01000079">
    <property type="protein sequence ID" value="EAA60403.1"/>
    <property type="molecule type" value="Genomic_DNA"/>
</dbReference>
<dbReference type="EMBL" id="BN001303">
    <property type="protein sequence ID" value="CBF77171.1"/>
    <property type="molecule type" value="Genomic_DNA"/>
</dbReference>
<dbReference type="RefSeq" id="XP_662205.1">
    <property type="nucleotide sequence ID" value="XM_657113.1"/>
</dbReference>
<dbReference type="SMR" id="Q5B4C9"/>
<dbReference type="FunCoup" id="Q5B4C9">
    <property type="interactions" value="88"/>
</dbReference>
<dbReference type="STRING" id="227321.Q5B4C9"/>
<dbReference type="CAZy" id="GT1">
    <property type="family name" value="Glycosyltransferase Family 1"/>
</dbReference>
<dbReference type="EnsemblFungi" id="CBF77171">
    <property type="protein sequence ID" value="CBF77171"/>
    <property type="gene ID" value="ANIA_04601"/>
</dbReference>
<dbReference type="KEGG" id="ani:ANIA_04601"/>
<dbReference type="VEuPathDB" id="FungiDB:AN4601"/>
<dbReference type="eggNOG" id="KOG1192">
    <property type="taxonomic scope" value="Eukaryota"/>
</dbReference>
<dbReference type="HOGENOM" id="CLU_000537_6_0_1"/>
<dbReference type="InParanoid" id="Q5B4C9"/>
<dbReference type="OMA" id="WRNKTLG"/>
<dbReference type="OrthoDB" id="10261837at2759"/>
<dbReference type="Proteomes" id="UP000000560">
    <property type="component" value="Chromosome III"/>
</dbReference>
<dbReference type="GO" id="GO:0034045">
    <property type="term" value="C:phagophore assembly site membrane"/>
    <property type="evidence" value="ECO:0007669"/>
    <property type="project" value="UniProtKB-SubCell"/>
</dbReference>
<dbReference type="GO" id="GO:0016906">
    <property type="term" value="F:sterol 3-beta-glucosyltransferase activity"/>
    <property type="evidence" value="ECO:0007669"/>
    <property type="project" value="UniProtKB-EC"/>
</dbReference>
<dbReference type="GO" id="GO:0008194">
    <property type="term" value="F:UDP-glycosyltransferase activity"/>
    <property type="evidence" value="ECO:0000318"/>
    <property type="project" value="GO_Central"/>
</dbReference>
<dbReference type="GO" id="GO:0006914">
    <property type="term" value="P:autophagy"/>
    <property type="evidence" value="ECO:0007669"/>
    <property type="project" value="UniProtKB-KW"/>
</dbReference>
<dbReference type="GO" id="GO:0005975">
    <property type="term" value="P:carbohydrate metabolic process"/>
    <property type="evidence" value="ECO:0007669"/>
    <property type="project" value="InterPro"/>
</dbReference>
<dbReference type="GO" id="GO:0030259">
    <property type="term" value="P:lipid glycosylation"/>
    <property type="evidence" value="ECO:0007669"/>
    <property type="project" value="InterPro"/>
</dbReference>
<dbReference type="GO" id="GO:0015031">
    <property type="term" value="P:protein transport"/>
    <property type="evidence" value="ECO:0007669"/>
    <property type="project" value="UniProtKB-KW"/>
</dbReference>
<dbReference type="GO" id="GO:0016126">
    <property type="term" value="P:sterol biosynthetic process"/>
    <property type="evidence" value="ECO:0007669"/>
    <property type="project" value="UniProtKB-KW"/>
</dbReference>
<dbReference type="GO" id="GO:0016125">
    <property type="term" value="P:sterol metabolic process"/>
    <property type="evidence" value="ECO:0000318"/>
    <property type="project" value="GO_Central"/>
</dbReference>
<dbReference type="CDD" id="cd03784">
    <property type="entry name" value="GT1_Gtf-like"/>
    <property type="match status" value="1"/>
</dbReference>
<dbReference type="CDD" id="cd13215">
    <property type="entry name" value="PH-GRAM1_AGT26"/>
    <property type="match status" value="1"/>
</dbReference>
<dbReference type="CDD" id="cd13216">
    <property type="entry name" value="PH-GRAM2_AGT26"/>
    <property type="match status" value="1"/>
</dbReference>
<dbReference type="FunFam" id="2.30.29.30:FF:000303">
    <property type="entry name" value="Sterol 3-beta-glucosyltransferase"/>
    <property type="match status" value="1"/>
</dbReference>
<dbReference type="FunFam" id="2.30.29.30:FF:000560">
    <property type="entry name" value="Sterol 3-beta-glucosyltransferase"/>
    <property type="match status" value="1"/>
</dbReference>
<dbReference type="FunFam" id="3.40.50.2000:FF:000029">
    <property type="entry name" value="Sterol 3-beta-glucosyltransferase"/>
    <property type="match status" value="1"/>
</dbReference>
<dbReference type="FunFam" id="3.40.50.2000:FF:000009">
    <property type="entry name" value="Sterol 3-beta-glucosyltransferase UGT80A2"/>
    <property type="match status" value="1"/>
</dbReference>
<dbReference type="Gene3D" id="3.40.50.2000">
    <property type="entry name" value="Glycogen Phosphorylase B"/>
    <property type="match status" value="2"/>
</dbReference>
<dbReference type="Gene3D" id="2.30.29.30">
    <property type="entry name" value="Pleckstrin-homology domain (PH domain)/Phosphotyrosine-binding domain (PTB)"/>
    <property type="match status" value="2"/>
</dbReference>
<dbReference type="InterPro" id="IPR048066">
    <property type="entry name" value="ATG26_PH_GRAM1"/>
</dbReference>
<dbReference type="InterPro" id="IPR048065">
    <property type="entry name" value="ATG26_PH_GRAM2"/>
</dbReference>
<dbReference type="InterPro" id="IPR010610">
    <property type="entry name" value="EryCIII-like_C"/>
</dbReference>
<dbReference type="InterPro" id="IPR050426">
    <property type="entry name" value="Glycosyltransferase_28"/>
</dbReference>
<dbReference type="InterPro" id="IPR004276">
    <property type="entry name" value="GlycoTrans_28_N"/>
</dbReference>
<dbReference type="InterPro" id="IPR004182">
    <property type="entry name" value="GRAM"/>
</dbReference>
<dbReference type="InterPro" id="IPR011993">
    <property type="entry name" value="PH-like_dom_sf"/>
</dbReference>
<dbReference type="InterPro" id="IPR001849">
    <property type="entry name" value="PH_domain"/>
</dbReference>
<dbReference type="InterPro" id="IPR002213">
    <property type="entry name" value="UDP_glucos_trans"/>
</dbReference>
<dbReference type="PANTHER" id="PTHR48050">
    <property type="entry name" value="STEROL 3-BETA-GLUCOSYLTRANSFERASE"/>
    <property type="match status" value="1"/>
</dbReference>
<dbReference type="PANTHER" id="PTHR48050:SF25">
    <property type="entry name" value="STEROL 3-BETA-GLUCOSYLTRANSFERASE"/>
    <property type="match status" value="1"/>
</dbReference>
<dbReference type="Pfam" id="PF06722">
    <property type="entry name" value="EryCIII-like_C"/>
    <property type="match status" value="1"/>
</dbReference>
<dbReference type="Pfam" id="PF03033">
    <property type="entry name" value="Glyco_transf_28"/>
    <property type="match status" value="1"/>
</dbReference>
<dbReference type="Pfam" id="PF02893">
    <property type="entry name" value="GRAM"/>
    <property type="match status" value="1"/>
</dbReference>
<dbReference type="Pfam" id="PF00169">
    <property type="entry name" value="PH"/>
    <property type="match status" value="1"/>
</dbReference>
<dbReference type="SMART" id="SM00568">
    <property type="entry name" value="GRAM"/>
    <property type="match status" value="2"/>
</dbReference>
<dbReference type="SMART" id="SM00233">
    <property type="entry name" value="PH"/>
    <property type="match status" value="1"/>
</dbReference>
<dbReference type="SUPFAM" id="SSF50729">
    <property type="entry name" value="PH domain-like"/>
    <property type="match status" value="1"/>
</dbReference>
<dbReference type="SUPFAM" id="SSF53756">
    <property type="entry name" value="UDP-Glycosyltransferase/glycogen phosphorylase"/>
    <property type="match status" value="1"/>
</dbReference>
<dbReference type="PROSITE" id="PS50003">
    <property type="entry name" value="PH_DOMAIN"/>
    <property type="match status" value="1"/>
</dbReference>
<keyword id="KW-0072">Autophagy</keyword>
<keyword id="KW-0963">Cytoplasm</keyword>
<keyword id="KW-0328">Glycosyltransferase</keyword>
<keyword id="KW-0444">Lipid biosynthesis</keyword>
<keyword id="KW-0443">Lipid metabolism</keyword>
<keyword id="KW-0472">Membrane</keyword>
<keyword id="KW-0653">Protein transport</keyword>
<keyword id="KW-1185">Reference proteome</keyword>
<keyword id="KW-0677">Repeat</keyword>
<keyword id="KW-0752">Steroid biosynthesis</keyword>
<keyword id="KW-0753">Steroid metabolism</keyword>
<keyword id="KW-0756">Sterol biosynthesis</keyword>
<keyword id="KW-1207">Sterol metabolism</keyword>
<keyword id="KW-0808">Transferase</keyword>
<keyword id="KW-0813">Transport</keyword>
<evidence type="ECO:0000250" key="1">
    <source>
        <dbReference type="UniProtKB" id="Q06321"/>
    </source>
</evidence>
<evidence type="ECO:0000250" key="2">
    <source>
        <dbReference type="UniProtKB" id="Q2U0C3"/>
    </source>
</evidence>
<evidence type="ECO:0000255" key="3"/>
<evidence type="ECO:0000255" key="4">
    <source>
        <dbReference type="PROSITE-ProRule" id="PRU00145"/>
    </source>
</evidence>
<evidence type="ECO:0000256" key="5">
    <source>
        <dbReference type="SAM" id="MobiDB-lite"/>
    </source>
</evidence>
<evidence type="ECO:0000305" key="6"/>
<reference key="1">
    <citation type="journal article" date="2005" name="Nature">
        <title>Sequencing of Aspergillus nidulans and comparative analysis with A. fumigatus and A. oryzae.</title>
        <authorList>
            <person name="Galagan J.E."/>
            <person name="Calvo S.E."/>
            <person name="Cuomo C."/>
            <person name="Ma L.-J."/>
            <person name="Wortman J.R."/>
            <person name="Batzoglou S."/>
            <person name="Lee S.-I."/>
            <person name="Bastuerkmen M."/>
            <person name="Spevak C.C."/>
            <person name="Clutterbuck J."/>
            <person name="Kapitonov V."/>
            <person name="Jurka J."/>
            <person name="Scazzocchio C."/>
            <person name="Farman M.L."/>
            <person name="Butler J."/>
            <person name="Purcell S."/>
            <person name="Harris S."/>
            <person name="Braus G.H."/>
            <person name="Draht O."/>
            <person name="Busch S."/>
            <person name="D'Enfert C."/>
            <person name="Bouchier C."/>
            <person name="Goldman G.H."/>
            <person name="Bell-Pedersen D."/>
            <person name="Griffiths-Jones S."/>
            <person name="Doonan J.H."/>
            <person name="Yu J."/>
            <person name="Vienken K."/>
            <person name="Pain A."/>
            <person name="Freitag M."/>
            <person name="Selker E.U."/>
            <person name="Archer D.B."/>
            <person name="Penalva M.A."/>
            <person name="Oakley B.R."/>
            <person name="Momany M."/>
            <person name="Tanaka T."/>
            <person name="Kumagai T."/>
            <person name="Asai K."/>
            <person name="Machida M."/>
            <person name="Nierman W.C."/>
            <person name="Denning D.W."/>
            <person name="Caddick M.X."/>
            <person name="Hynes M."/>
            <person name="Paoletti M."/>
            <person name="Fischer R."/>
            <person name="Miller B.L."/>
            <person name="Dyer P.S."/>
            <person name="Sachs M.S."/>
            <person name="Osmani S.A."/>
            <person name="Birren B.W."/>
        </authorList>
    </citation>
    <scope>NUCLEOTIDE SEQUENCE [LARGE SCALE GENOMIC DNA]</scope>
    <source>
        <strain>FGSC A4 / ATCC 38163 / CBS 112.46 / NRRL 194 / M139</strain>
    </source>
</reference>
<reference key="2">
    <citation type="journal article" date="2009" name="Fungal Genet. Biol.">
        <title>The 2008 update of the Aspergillus nidulans genome annotation: a community effort.</title>
        <authorList>
            <person name="Wortman J.R."/>
            <person name="Gilsenan J.M."/>
            <person name="Joardar V."/>
            <person name="Deegan J."/>
            <person name="Clutterbuck J."/>
            <person name="Andersen M.R."/>
            <person name="Archer D."/>
            <person name="Bencina M."/>
            <person name="Braus G."/>
            <person name="Coutinho P."/>
            <person name="von Dohren H."/>
            <person name="Doonan J."/>
            <person name="Driessen A.J."/>
            <person name="Durek P."/>
            <person name="Espeso E."/>
            <person name="Fekete E."/>
            <person name="Flipphi M."/>
            <person name="Estrada C.G."/>
            <person name="Geysens S."/>
            <person name="Goldman G."/>
            <person name="de Groot P.W."/>
            <person name="Hansen K."/>
            <person name="Harris S.D."/>
            <person name="Heinekamp T."/>
            <person name="Helmstaedt K."/>
            <person name="Henrissat B."/>
            <person name="Hofmann G."/>
            <person name="Homan T."/>
            <person name="Horio T."/>
            <person name="Horiuchi H."/>
            <person name="James S."/>
            <person name="Jones M."/>
            <person name="Karaffa L."/>
            <person name="Karanyi Z."/>
            <person name="Kato M."/>
            <person name="Keller N."/>
            <person name="Kelly D.E."/>
            <person name="Kiel J.A."/>
            <person name="Kim J.M."/>
            <person name="van der Klei I.J."/>
            <person name="Klis F.M."/>
            <person name="Kovalchuk A."/>
            <person name="Krasevec N."/>
            <person name="Kubicek C.P."/>
            <person name="Liu B."/>
            <person name="Maccabe A."/>
            <person name="Meyer V."/>
            <person name="Mirabito P."/>
            <person name="Miskei M."/>
            <person name="Mos M."/>
            <person name="Mullins J."/>
            <person name="Nelson D.R."/>
            <person name="Nielsen J."/>
            <person name="Oakley B.R."/>
            <person name="Osmani S.A."/>
            <person name="Pakula T."/>
            <person name="Paszewski A."/>
            <person name="Paulsen I."/>
            <person name="Pilsyk S."/>
            <person name="Pocsi I."/>
            <person name="Punt P.J."/>
            <person name="Ram A.F."/>
            <person name="Ren Q."/>
            <person name="Robellet X."/>
            <person name="Robson G."/>
            <person name="Seiboth B."/>
            <person name="van Solingen P."/>
            <person name="Specht T."/>
            <person name="Sun J."/>
            <person name="Taheri-Talesh N."/>
            <person name="Takeshita N."/>
            <person name="Ussery D."/>
            <person name="vanKuyk P.A."/>
            <person name="Visser H."/>
            <person name="van de Vondervoort P.J."/>
            <person name="de Vries R.P."/>
            <person name="Walton J."/>
            <person name="Xiang X."/>
            <person name="Xiong Y."/>
            <person name="Zeng A.P."/>
            <person name="Brandt B.W."/>
            <person name="Cornell M.J."/>
            <person name="van den Hondel C.A."/>
            <person name="Visser J."/>
            <person name="Oliver S.G."/>
            <person name="Turner G."/>
        </authorList>
    </citation>
    <scope>GENOME REANNOTATION</scope>
    <source>
        <strain>FGSC A4 / ATCC 38163 / CBS 112.46 / NRRL 194 / M139</strain>
    </source>
</reference>